<dbReference type="EMBL" id="FN393082">
    <property type="protein sequence ID" value="CAY81820.1"/>
    <property type="molecule type" value="Genomic_DNA"/>
</dbReference>
<dbReference type="EMBL" id="FN393082">
    <property type="protein sequence ID" value="CAY81821.1"/>
    <property type="status" value="ALT_INIT"/>
    <property type="molecule type" value="Genomic_DNA"/>
</dbReference>
<dbReference type="SMR" id="C8ZEK4"/>
<dbReference type="HOGENOM" id="CLU_008912_0_0_1"/>
<dbReference type="OrthoDB" id="35970at4893"/>
<dbReference type="Proteomes" id="UP000000286">
    <property type="component" value="Chromosome XIII, Scaffold EC1118_1M3"/>
</dbReference>
<dbReference type="GO" id="GO:0005769">
    <property type="term" value="C:early endosome"/>
    <property type="evidence" value="ECO:0007669"/>
    <property type="project" value="TreeGrafter"/>
</dbReference>
<dbReference type="GO" id="GO:0005770">
    <property type="term" value="C:late endosome"/>
    <property type="evidence" value="ECO:0007669"/>
    <property type="project" value="TreeGrafter"/>
</dbReference>
<dbReference type="GO" id="GO:0005886">
    <property type="term" value="C:plasma membrane"/>
    <property type="evidence" value="ECO:0007669"/>
    <property type="project" value="TreeGrafter"/>
</dbReference>
<dbReference type="GO" id="GO:0030133">
    <property type="term" value="C:transport vesicle"/>
    <property type="evidence" value="ECO:0007669"/>
    <property type="project" value="TreeGrafter"/>
</dbReference>
<dbReference type="GO" id="GO:0097422">
    <property type="term" value="C:tubular endosome"/>
    <property type="evidence" value="ECO:0007669"/>
    <property type="project" value="TreeGrafter"/>
</dbReference>
<dbReference type="GO" id="GO:0005085">
    <property type="term" value="F:guanyl-nucleotide exchange factor activity"/>
    <property type="evidence" value="ECO:0007669"/>
    <property type="project" value="TreeGrafter"/>
</dbReference>
<dbReference type="GO" id="GO:0000149">
    <property type="term" value="F:SNARE binding"/>
    <property type="evidence" value="ECO:0007669"/>
    <property type="project" value="TreeGrafter"/>
</dbReference>
<dbReference type="GO" id="GO:0045022">
    <property type="term" value="P:early endosome to late endosome transport"/>
    <property type="evidence" value="ECO:0007669"/>
    <property type="project" value="TreeGrafter"/>
</dbReference>
<dbReference type="Gene3D" id="1.25.40.20">
    <property type="entry name" value="Ankyrin repeat-containing domain"/>
    <property type="match status" value="1"/>
</dbReference>
<dbReference type="Gene3D" id="1.20.1050.80">
    <property type="entry name" value="VPS9 domain"/>
    <property type="match status" value="1"/>
</dbReference>
<dbReference type="InterPro" id="IPR036770">
    <property type="entry name" value="Ankyrin_rpt-contain_sf"/>
</dbReference>
<dbReference type="InterPro" id="IPR051248">
    <property type="entry name" value="UPF0507/Ank_repeat_27"/>
</dbReference>
<dbReference type="InterPro" id="IPR003123">
    <property type="entry name" value="VPS9"/>
</dbReference>
<dbReference type="InterPro" id="IPR037191">
    <property type="entry name" value="VPS9_dom_sf"/>
</dbReference>
<dbReference type="PANTHER" id="PTHR24170">
    <property type="entry name" value="ANKYRIN REPEAT DOMAIN-CONTAINING PROTEIN 27"/>
    <property type="match status" value="1"/>
</dbReference>
<dbReference type="PANTHER" id="PTHR24170:SF1">
    <property type="entry name" value="DOMAIN PROTEIN, PUTATIVE (AFU_ORTHOLOGUE AFUA_1G09870)-RELATED"/>
    <property type="match status" value="1"/>
</dbReference>
<dbReference type="Pfam" id="PF02204">
    <property type="entry name" value="VPS9"/>
    <property type="match status" value="1"/>
</dbReference>
<dbReference type="SUPFAM" id="SSF140860">
    <property type="entry name" value="Pseudo ankyrin repeat-like"/>
    <property type="match status" value="1"/>
</dbReference>
<dbReference type="SUPFAM" id="SSF109993">
    <property type="entry name" value="VPS9 domain"/>
    <property type="match status" value="1"/>
</dbReference>
<dbReference type="PROSITE" id="PS51205">
    <property type="entry name" value="VPS9"/>
    <property type="match status" value="1"/>
</dbReference>
<feature type="chain" id="PRO_0000393366" description="UPF0507 protein EC1118_1M3_1541g">
    <location>
        <begin position="1"/>
        <end position="1090"/>
    </location>
</feature>
<feature type="domain" description="VPS9" evidence="1">
    <location>
        <begin position="289"/>
        <end position="436"/>
    </location>
</feature>
<protein>
    <recommendedName>
        <fullName>UPF0507 protein EC1118_1M3_1541g</fullName>
    </recommendedName>
</protein>
<proteinExistence type="inferred from homology"/>
<name>U507_YEAS8</name>
<comment type="similarity">
    <text evidence="2">Belongs to the UPF0507 family.</text>
</comment>
<comment type="sequence caution" evidence="2">
    <conflict type="erroneous initiation">
        <sequence resource="EMBL-CDS" id="CAY81821"/>
    </conflict>
</comment>
<sequence length="1090" mass="125971">MSVYHLPTLLNPLVNAIFNCPEPERSPLKKLFANLKTRRFILLAPPSEYLLNYHDVKSKLPLHDLCYNAEFINSYILLMTENSYINTNSRDSHYETLDGKTVVIQWKNNVIHALNGFHIRRRLKILETKILPNFNDYFEGAADFIILFIDQPLNCEFVPNDYLQCFHNYEKIPKNAHAMPNLSIDSFQQERSSFENILHIHPARLTQLGQLFSSYRTLAPGDDPSRSIFESIVQQAFDGMKSDSLFKNFSNLYDLIHDYFELNLYDDIWSRLTTHFKGHEVDTEKYKYFSVNQLLTDFYSKDYGEFELHDITLIERRLHLASKHLQKLALTHSYAEKSKILVETLQKLSGTTEMDSHQLELPDGLNNMTMDADTLISLFVLVVCRSEQKHLKSHLYYLQNFSNNSSSTKFGILGYAVSTLEAVVCYFEDFNKNTGNVAKANTLCEKTKNLLDKLSCENPTNEVEDLATYKDILTYRNEQGQSILSICITNHKNYILLDILSEYETDFPVEDLLEDETIDGSTLLIESIKAGNLEAAKVLIKIMLFNCTEEELVSYINKTDKYARTVAHYLTHEMDILKSIGNYIDWKRKNSSGQTPLFSIFRSYDQPNYEEMVKTAFDIANTWYRKHNSLFDYLDHTDNKGNSLLHVLKTNIPILLQLTKLDINEENYKGLTPLMVYVKYKRLSNIDAITKDRRLILEKVQNSTFFTCFDYAKDHSVLSKIGERGVKDSLFGLIYFHSLRYHNLNATTNITSVSNAEKPFATTVINMKTIQGLLRSILKDNPFTFLPLNTYIDEISHLNRSDLTIIGKTDVTSLLHELTNCFNVLLFLKKIPENLFTDEASILYWMRINTSKRNQKPSGKENPKTMEPEEINMIQSFLRFNFDEISSFKASLNILRKVLIFINLKSDDFEDAYKGLNEMGRKLINSEASSAFKGIITNHNMFSELSLAELLENVRFLEQCTIQLSSFVQIILFEKIPNWWKHYGEFLALHKSYRKAFPNMVKPKSASDTSSRAPLGGFIETKREQSEQRLAVQIKASSKMLKELGSEIFVAHERLAEELSNYMEFRKACLDQRSLVAFATTNISVLQECV</sequence>
<reference key="1">
    <citation type="journal article" date="2009" name="Proc. Natl. Acad. Sci. U.S.A.">
        <title>Eukaryote-to-eukaryote gene transfer events revealed by the genome sequence of the wine yeast Saccharomyces cerevisiae EC1118.</title>
        <authorList>
            <person name="Novo M."/>
            <person name="Bigey F."/>
            <person name="Beyne E."/>
            <person name="Galeote V."/>
            <person name="Gavory F."/>
            <person name="Mallet S."/>
            <person name="Cambon B."/>
            <person name="Legras J.-L."/>
            <person name="Wincker P."/>
            <person name="Casaregola S."/>
            <person name="Dequin S."/>
        </authorList>
    </citation>
    <scope>NUCLEOTIDE SEQUENCE [LARGE SCALE GENOMIC DNA]</scope>
    <source>
        <strain>Lalvin EC1118 / Prise de mousse</strain>
    </source>
</reference>
<gene>
    <name type="ORF">EC1118_1M3_1541g</name>
    <name type="ORF">EC1118_1M3_1552g</name>
</gene>
<organism>
    <name type="scientific">Saccharomyces cerevisiae (strain Lalvin EC1118 / Prise de mousse)</name>
    <name type="common">Baker's yeast</name>
    <dbReference type="NCBI Taxonomy" id="643680"/>
    <lineage>
        <taxon>Eukaryota</taxon>
        <taxon>Fungi</taxon>
        <taxon>Dikarya</taxon>
        <taxon>Ascomycota</taxon>
        <taxon>Saccharomycotina</taxon>
        <taxon>Saccharomycetes</taxon>
        <taxon>Saccharomycetales</taxon>
        <taxon>Saccharomycetaceae</taxon>
        <taxon>Saccharomyces</taxon>
    </lineage>
</organism>
<accession>C8ZEK4</accession>
<accession>C8ZEK5</accession>
<evidence type="ECO:0000255" key="1">
    <source>
        <dbReference type="PROSITE-ProRule" id="PRU00550"/>
    </source>
</evidence>
<evidence type="ECO:0000305" key="2"/>